<keyword id="KW-0131">Cell cycle</keyword>
<keyword id="KW-0132">Cell division</keyword>
<keyword id="KW-0717">Septation</keyword>
<keyword id="KW-0749">Sporulation</keyword>
<dbReference type="EMBL" id="CP001283">
    <property type="protein sequence ID" value="ACK88168.1"/>
    <property type="molecule type" value="Genomic_DNA"/>
</dbReference>
<dbReference type="RefSeq" id="WP_000454041.1">
    <property type="nucleotide sequence ID" value="NC_011773.1"/>
</dbReference>
<dbReference type="SMR" id="B7JK55"/>
<dbReference type="GeneID" id="93011022"/>
<dbReference type="KEGG" id="bcu:BCAH820_0054"/>
<dbReference type="HOGENOM" id="CLU_103669_2_1_9"/>
<dbReference type="Proteomes" id="UP000001363">
    <property type="component" value="Chromosome"/>
</dbReference>
<dbReference type="GO" id="GO:0030436">
    <property type="term" value="P:asexual sporulation"/>
    <property type="evidence" value="ECO:0007669"/>
    <property type="project" value="UniProtKB-UniRule"/>
</dbReference>
<dbReference type="GO" id="GO:0000917">
    <property type="term" value="P:division septum assembly"/>
    <property type="evidence" value="ECO:0007669"/>
    <property type="project" value="UniProtKB-KW"/>
</dbReference>
<dbReference type="GO" id="GO:0030435">
    <property type="term" value="P:sporulation resulting in formation of a cellular spore"/>
    <property type="evidence" value="ECO:0007669"/>
    <property type="project" value="UniProtKB-KW"/>
</dbReference>
<dbReference type="FunFam" id="3.30.1120.40:FF:000001">
    <property type="entry name" value="Putative septation protein SpoVG"/>
    <property type="match status" value="1"/>
</dbReference>
<dbReference type="Gene3D" id="3.30.1120.40">
    <property type="entry name" value="Stage V sporulation protein G"/>
    <property type="match status" value="1"/>
</dbReference>
<dbReference type="HAMAP" id="MF_00819">
    <property type="entry name" value="SpoVG"/>
    <property type="match status" value="1"/>
</dbReference>
<dbReference type="InterPro" id="IPR007170">
    <property type="entry name" value="SpoVG"/>
</dbReference>
<dbReference type="InterPro" id="IPR036751">
    <property type="entry name" value="SpoVG_sf"/>
</dbReference>
<dbReference type="NCBIfam" id="NF009749">
    <property type="entry name" value="PRK13259.1"/>
    <property type="match status" value="1"/>
</dbReference>
<dbReference type="PANTHER" id="PTHR38429">
    <property type="entry name" value="SEPTATION PROTEIN SPOVG-RELATED"/>
    <property type="match status" value="1"/>
</dbReference>
<dbReference type="PANTHER" id="PTHR38429:SF1">
    <property type="entry name" value="SEPTATION PROTEIN SPOVG-RELATED"/>
    <property type="match status" value="1"/>
</dbReference>
<dbReference type="Pfam" id="PF04026">
    <property type="entry name" value="SpoVG"/>
    <property type="match status" value="1"/>
</dbReference>
<dbReference type="SUPFAM" id="SSF160537">
    <property type="entry name" value="SpoVG-like"/>
    <property type="match status" value="1"/>
</dbReference>
<comment type="function">
    <text evidence="1">Essential for sporulation. Interferes with or is a negative regulator of the pathway leading to asymmetric septation.</text>
</comment>
<comment type="similarity">
    <text evidence="1">Belongs to the SpoVG family.</text>
</comment>
<evidence type="ECO:0000255" key="1">
    <source>
        <dbReference type="HAMAP-Rule" id="MF_00819"/>
    </source>
</evidence>
<protein>
    <recommendedName>
        <fullName evidence="1">Putative septation protein SpoVG</fullName>
    </recommendedName>
    <alternativeName>
        <fullName evidence="1">Stage V sporulation protein G</fullName>
    </alternativeName>
</protein>
<feature type="chain" id="PRO_1000196488" description="Putative septation protein SpoVG">
    <location>
        <begin position="1"/>
        <end position="97"/>
    </location>
</feature>
<organism>
    <name type="scientific">Bacillus cereus (strain AH820)</name>
    <dbReference type="NCBI Taxonomy" id="405535"/>
    <lineage>
        <taxon>Bacteria</taxon>
        <taxon>Bacillati</taxon>
        <taxon>Bacillota</taxon>
        <taxon>Bacilli</taxon>
        <taxon>Bacillales</taxon>
        <taxon>Bacillaceae</taxon>
        <taxon>Bacillus</taxon>
        <taxon>Bacillus cereus group</taxon>
    </lineage>
</organism>
<proteinExistence type="inferred from homology"/>
<name>SP5G_BACC0</name>
<accession>B7JK55</accession>
<sequence>MEVTDVRLRRVNTEGRMRAIASITLDHEFVVHDIRVIDGNNGLFVAMPSKRTPDGEFRDIAHPINSGTRSKIQDAVLTEYHRLGELEEVEFEEAGAS</sequence>
<reference key="1">
    <citation type="submission" date="2008-10" db="EMBL/GenBank/DDBJ databases">
        <title>Genome sequence of Bacillus cereus AH820.</title>
        <authorList>
            <person name="Dodson R.J."/>
            <person name="Durkin A.S."/>
            <person name="Rosovitz M.J."/>
            <person name="Rasko D.A."/>
            <person name="Hoffmaster A."/>
            <person name="Ravel J."/>
            <person name="Sutton G."/>
        </authorList>
    </citation>
    <scope>NUCLEOTIDE SEQUENCE [LARGE SCALE GENOMIC DNA]</scope>
    <source>
        <strain>AH820</strain>
    </source>
</reference>
<gene>
    <name evidence="1" type="primary">spoVG</name>
    <name type="ordered locus">BCAH820_0054</name>
</gene>